<keyword id="KW-0378">Hydrolase</keyword>
<keyword id="KW-0479">Metal-binding</keyword>
<keyword id="KW-1185">Reference proteome</keyword>
<keyword id="KW-0862">Zinc</keyword>
<name>GLO2_TOLAT</name>
<comment type="function">
    <text evidence="1">Thiolesterase that catalyzes the hydrolysis of S-D-lactoyl-glutathione to form glutathione and D-lactic acid.</text>
</comment>
<comment type="catalytic activity">
    <reaction evidence="1">
        <text>an S-(2-hydroxyacyl)glutathione + H2O = a 2-hydroxy carboxylate + glutathione + H(+)</text>
        <dbReference type="Rhea" id="RHEA:21864"/>
        <dbReference type="ChEBI" id="CHEBI:15377"/>
        <dbReference type="ChEBI" id="CHEBI:15378"/>
        <dbReference type="ChEBI" id="CHEBI:57925"/>
        <dbReference type="ChEBI" id="CHEBI:58896"/>
        <dbReference type="ChEBI" id="CHEBI:71261"/>
        <dbReference type="EC" id="3.1.2.6"/>
    </reaction>
</comment>
<comment type="cofactor">
    <cofactor evidence="1">
        <name>Zn(2+)</name>
        <dbReference type="ChEBI" id="CHEBI:29105"/>
    </cofactor>
    <text evidence="1">Binds 2 Zn(2+) ions per subunit.</text>
</comment>
<comment type="pathway">
    <text evidence="1">Secondary metabolite metabolism; methylglyoxal degradation; (R)-lactate from methylglyoxal: step 2/2.</text>
</comment>
<comment type="subunit">
    <text evidence="1">Monomer.</text>
</comment>
<comment type="similarity">
    <text evidence="1">Belongs to the metallo-beta-lactamase superfamily. Glyoxalase II family.</text>
</comment>
<dbReference type="EC" id="3.1.2.6" evidence="1"/>
<dbReference type="EMBL" id="CP001616">
    <property type="protein sequence ID" value="ACQ92537.1"/>
    <property type="molecule type" value="Genomic_DNA"/>
</dbReference>
<dbReference type="SMR" id="C4LC58"/>
<dbReference type="STRING" id="595494.Tola_0909"/>
<dbReference type="KEGG" id="tau:Tola_0909"/>
<dbReference type="eggNOG" id="COG0491">
    <property type="taxonomic scope" value="Bacteria"/>
</dbReference>
<dbReference type="HOGENOM" id="CLU_030571_4_1_6"/>
<dbReference type="OrthoDB" id="9802248at2"/>
<dbReference type="UniPathway" id="UPA00619">
    <property type="reaction ID" value="UER00676"/>
</dbReference>
<dbReference type="Proteomes" id="UP000009073">
    <property type="component" value="Chromosome"/>
</dbReference>
<dbReference type="GO" id="GO:0004416">
    <property type="term" value="F:hydroxyacylglutathione hydrolase activity"/>
    <property type="evidence" value="ECO:0007669"/>
    <property type="project" value="UniProtKB-UniRule"/>
</dbReference>
<dbReference type="GO" id="GO:0046872">
    <property type="term" value="F:metal ion binding"/>
    <property type="evidence" value="ECO:0007669"/>
    <property type="project" value="UniProtKB-KW"/>
</dbReference>
<dbReference type="GO" id="GO:0019243">
    <property type="term" value="P:methylglyoxal catabolic process to D-lactate via S-lactoyl-glutathione"/>
    <property type="evidence" value="ECO:0007669"/>
    <property type="project" value="InterPro"/>
</dbReference>
<dbReference type="CDD" id="cd07723">
    <property type="entry name" value="hydroxyacylglutathione_hydrolase_MBL-fold"/>
    <property type="match status" value="1"/>
</dbReference>
<dbReference type="Gene3D" id="3.60.15.10">
    <property type="entry name" value="Ribonuclease Z/Hydroxyacylglutathione hydrolase-like"/>
    <property type="match status" value="1"/>
</dbReference>
<dbReference type="HAMAP" id="MF_01374">
    <property type="entry name" value="Glyoxalase_2"/>
    <property type="match status" value="1"/>
</dbReference>
<dbReference type="InterPro" id="IPR035680">
    <property type="entry name" value="Clx_II_MBL"/>
</dbReference>
<dbReference type="InterPro" id="IPR050110">
    <property type="entry name" value="Glyoxalase_II_hydrolase"/>
</dbReference>
<dbReference type="InterPro" id="IPR032282">
    <property type="entry name" value="HAGH_C"/>
</dbReference>
<dbReference type="InterPro" id="IPR017782">
    <property type="entry name" value="Hydroxyacylglutathione_Hdrlase"/>
</dbReference>
<dbReference type="InterPro" id="IPR001279">
    <property type="entry name" value="Metallo-B-lactamas"/>
</dbReference>
<dbReference type="InterPro" id="IPR036866">
    <property type="entry name" value="RibonucZ/Hydroxyglut_hydro"/>
</dbReference>
<dbReference type="NCBIfam" id="TIGR03413">
    <property type="entry name" value="GSH_gloB"/>
    <property type="match status" value="1"/>
</dbReference>
<dbReference type="PANTHER" id="PTHR43705">
    <property type="entry name" value="HYDROXYACYLGLUTATHIONE HYDROLASE"/>
    <property type="match status" value="1"/>
</dbReference>
<dbReference type="PANTHER" id="PTHR43705:SF1">
    <property type="entry name" value="HYDROXYACYLGLUTATHIONE HYDROLASE GLOB"/>
    <property type="match status" value="1"/>
</dbReference>
<dbReference type="Pfam" id="PF16123">
    <property type="entry name" value="HAGH_C"/>
    <property type="match status" value="1"/>
</dbReference>
<dbReference type="Pfam" id="PF00753">
    <property type="entry name" value="Lactamase_B"/>
    <property type="match status" value="1"/>
</dbReference>
<dbReference type="PIRSF" id="PIRSF005457">
    <property type="entry name" value="Glx"/>
    <property type="match status" value="1"/>
</dbReference>
<dbReference type="SMART" id="SM00849">
    <property type="entry name" value="Lactamase_B"/>
    <property type="match status" value="1"/>
</dbReference>
<dbReference type="SUPFAM" id="SSF56281">
    <property type="entry name" value="Metallo-hydrolase/oxidoreductase"/>
    <property type="match status" value="1"/>
</dbReference>
<protein>
    <recommendedName>
        <fullName evidence="1">Hydroxyacylglutathione hydrolase</fullName>
        <ecNumber evidence="1">3.1.2.6</ecNumber>
    </recommendedName>
    <alternativeName>
        <fullName evidence="1">Glyoxalase II</fullName>
        <shortName evidence="1">Glx II</shortName>
    </alternativeName>
</protein>
<accession>C4LC58</accession>
<feature type="chain" id="PRO_1000215088" description="Hydroxyacylglutathione hydrolase">
    <location>
        <begin position="1"/>
        <end position="256"/>
    </location>
</feature>
<feature type="binding site" evidence="1">
    <location>
        <position position="53"/>
    </location>
    <ligand>
        <name>Zn(2+)</name>
        <dbReference type="ChEBI" id="CHEBI:29105"/>
        <label>1</label>
    </ligand>
</feature>
<feature type="binding site" evidence="1">
    <location>
        <position position="55"/>
    </location>
    <ligand>
        <name>Zn(2+)</name>
        <dbReference type="ChEBI" id="CHEBI:29105"/>
        <label>1</label>
    </ligand>
</feature>
<feature type="binding site" evidence="1">
    <location>
        <position position="57"/>
    </location>
    <ligand>
        <name>Zn(2+)</name>
        <dbReference type="ChEBI" id="CHEBI:29105"/>
        <label>2</label>
    </ligand>
</feature>
<feature type="binding site" evidence="1">
    <location>
        <position position="58"/>
    </location>
    <ligand>
        <name>Zn(2+)</name>
        <dbReference type="ChEBI" id="CHEBI:29105"/>
        <label>2</label>
    </ligand>
</feature>
<feature type="binding site" evidence="1">
    <location>
        <position position="113"/>
    </location>
    <ligand>
        <name>Zn(2+)</name>
        <dbReference type="ChEBI" id="CHEBI:29105"/>
        <label>1</label>
    </ligand>
</feature>
<feature type="binding site" evidence="1">
    <location>
        <position position="130"/>
    </location>
    <ligand>
        <name>Zn(2+)</name>
        <dbReference type="ChEBI" id="CHEBI:29105"/>
        <label>1</label>
    </ligand>
</feature>
<feature type="binding site" evidence="1">
    <location>
        <position position="130"/>
    </location>
    <ligand>
        <name>Zn(2+)</name>
        <dbReference type="ChEBI" id="CHEBI:29105"/>
        <label>2</label>
    </ligand>
</feature>
<feature type="binding site" evidence="1">
    <location>
        <position position="168"/>
    </location>
    <ligand>
        <name>Zn(2+)</name>
        <dbReference type="ChEBI" id="CHEBI:29105"/>
        <label>2</label>
    </ligand>
</feature>
<reference key="1">
    <citation type="submission" date="2009-05" db="EMBL/GenBank/DDBJ databases">
        <title>Complete sequence of Tolumonas auensis DSM 9187.</title>
        <authorList>
            <consortium name="US DOE Joint Genome Institute"/>
            <person name="Lucas S."/>
            <person name="Copeland A."/>
            <person name="Lapidus A."/>
            <person name="Glavina del Rio T."/>
            <person name="Tice H."/>
            <person name="Bruce D."/>
            <person name="Goodwin L."/>
            <person name="Pitluck S."/>
            <person name="Chertkov O."/>
            <person name="Brettin T."/>
            <person name="Detter J.C."/>
            <person name="Han C."/>
            <person name="Larimer F."/>
            <person name="Land M."/>
            <person name="Hauser L."/>
            <person name="Kyrpides N."/>
            <person name="Mikhailova N."/>
            <person name="Spring S."/>
            <person name="Beller H."/>
        </authorList>
    </citation>
    <scope>NUCLEOTIDE SEQUENCE [LARGE SCALE GENOMIC DNA]</scope>
    <source>
        <strain>DSM 9187 / NBRC 110442 / TA 4</strain>
    </source>
</reference>
<evidence type="ECO:0000255" key="1">
    <source>
        <dbReference type="HAMAP-Rule" id="MF_01374"/>
    </source>
</evidence>
<sequence length="256" mass="28922">MLQVQTIPSRQDNYIWLIKQGNQAIVVDPGESAPVIERLRQQSLNLKAIFVTHHHHDHVDGVAELLALYPQCAVYGPQITLTDVPQLQTMRDQDLISFPDLDLTFTVWHTPGHTAEHIVFHGHGALFCGDTLFSGGCGRLFSGTAEQMYHSLQRLASLPEDTLVYPAHEYTYNNLSYCLQAEPDNVFTIKRIKEVSKLRQQGCPTLPSTIGIEKQSNVFLRTHMPSVAVFAQNSSELYLENEIQIFAILREKKNNL</sequence>
<gene>
    <name evidence="1" type="primary">gloB</name>
    <name type="ordered locus">Tola_0909</name>
</gene>
<organism>
    <name type="scientific">Tolumonas auensis (strain DSM 9187 / NBRC 110442 / TA 4)</name>
    <dbReference type="NCBI Taxonomy" id="595494"/>
    <lineage>
        <taxon>Bacteria</taxon>
        <taxon>Pseudomonadati</taxon>
        <taxon>Pseudomonadota</taxon>
        <taxon>Gammaproteobacteria</taxon>
        <taxon>Aeromonadales</taxon>
        <taxon>Aeromonadaceae</taxon>
        <taxon>Tolumonas</taxon>
    </lineage>
</organism>
<proteinExistence type="inferred from homology"/>